<protein>
    <recommendedName>
        <fullName evidence="1">Fe/S biogenesis protein NfuA</fullName>
    </recommendedName>
</protein>
<gene>
    <name evidence="1" type="primary">nfuA</name>
    <name type="ordered locus">ABBFA_002630</name>
</gene>
<name>NFUA_ACIB3</name>
<sequence>MSTENTNTAVAEEIPNLLITPSAQEYLHELLAKQNTPGIGVRIFVEHPGTPRAECCMAYSAPEEVVPTDYKQDYPDFPAYIDAPSIPYLLDAVIDYNKDRFGGQLTFRAPNSKVPRVGPDASIEERITYVLQAEINPGLAGHGGNCSLVEVQDDPEHGLTAVLKFGGGCQGCSAIDVTLKQGVETTLKEHIPELQRVVDQTDHTQAEGAYFK</sequence>
<dbReference type="EMBL" id="CP001172">
    <property type="protein sequence ID" value="ACJ58580.1"/>
    <property type="molecule type" value="Genomic_DNA"/>
</dbReference>
<dbReference type="RefSeq" id="WP_000102721.1">
    <property type="nucleotide sequence ID" value="NZ_CP001172.1"/>
</dbReference>
<dbReference type="SMR" id="B7GXX8"/>
<dbReference type="GeneID" id="92892942"/>
<dbReference type="HOGENOM" id="CLU_094569_0_0_6"/>
<dbReference type="Proteomes" id="UP000006924">
    <property type="component" value="Chromosome"/>
</dbReference>
<dbReference type="GO" id="GO:0051539">
    <property type="term" value="F:4 iron, 4 sulfur cluster binding"/>
    <property type="evidence" value="ECO:0007669"/>
    <property type="project" value="UniProtKB-UniRule"/>
</dbReference>
<dbReference type="GO" id="GO:0005506">
    <property type="term" value="F:iron ion binding"/>
    <property type="evidence" value="ECO:0007669"/>
    <property type="project" value="InterPro"/>
</dbReference>
<dbReference type="GO" id="GO:0016226">
    <property type="term" value="P:iron-sulfur cluster assembly"/>
    <property type="evidence" value="ECO:0007669"/>
    <property type="project" value="UniProtKB-UniRule"/>
</dbReference>
<dbReference type="GO" id="GO:0051604">
    <property type="term" value="P:protein maturation"/>
    <property type="evidence" value="ECO:0007669"/>
    <property type="project" value="UniProtKB-UniRule"/>
</dbReference>
<dbReference type="Gene3D" id="3.30.300.130">
    <property type="entry name" value="Fe-S cluster assembly (FSCA)"/>
    <property type="match status" value="1"/>
</dbReference>
<dbReference type="Gene3D" id="2.60.300.12">
    <property type="entry name" value="HesB-like domain"/>
    <property type="match status" value="1"/>
</dbReference>
<dbReference type="HAMAP" id="MF_01637">
    <property type="entry name" value="Fe_S_biogen_NfuA"/>
    <property type="match status" value="1"/>
</dbReference>
<dbReference type="InterPro" id="IPR017726">
    <property type="entry name" value="Fe/S_biogenesis_protein_NfuA"/>
</dbReference>
<dbReference type="InterPro" id="IPR000361">
    <property type="entry name" value="FeS_biogenesis"/>
</dbReference>
<dbReference type="InterPro" id="IPR034904">
    <property type="entry name" value="FSCA_dom_sf"/>
</dbReference>
<dbReference type="InterPro" id="IPR035903">
    <property type="entry name" value="HesB-like_dom_sf"/>
</dbReference>
<dbReference type="InterPro" id="IPR001075">
    <property type="entry name" value="NIF_FeS_clus_asmbl_NifU_C"/>
</dbReference>
<dbReference type="NCBIfam" id="TIGR03341">
    <property type="entry name" value="YhgI_GntY"/>
    <property type="match status" value="1"/>
</dbReference>
<dbReference type="PANTHER" id="PTHR11178:SF51">
    <property type="entry name" value="FE_S BIOGENESIS PROTEIN NFUA"/>
    <property type="match status" value="1"/>
</dbReference>
<dbReference type="PANTHER" id="PTHR11178">
    <property type="entry name" value="IRON-SULFUR CLUSTER SCAFFOLD PROTEIN NFU-RELATED"/>
    <property type="match status" value="1"/>
</dbReference>
<dbReference type="Pfam" id="PF01521">
    <property type="entry name" value="Fe-S_biosyn"/>
    <property type="match status" value="1"/>
</dbReference>
<dbReference type="Pfam" id="PF01106">
    <property type="entry name" value="NifU"/>
    <property type="match status" value="1"/>
</dbReference>
<dbReference type="SUPFAM" id="SSF117916">
    <property type="entry name" value="Fe-S cluster assembly (FSCA) domain-like"/>
    <property type="match status" value="1"/>
</dbReference>
<dbReference type="SUPFAM" id="SSF89360">
    <property type="entry name" value="HesB-like domain"/>
    <property type="match status" value="1"/>
</dbReference>
<evidence type="ECO:0000255" key="1">
    <source>
        <dbReference type="HAMAP-Rule" id="MF_01637"/>
    </source>
</evidence>
<organism>
    <name type="scientific">Acinetobacter baumannii (strain AB307-0294)</name>
    <dbReference type="NCBI Taxonomy" id="557600"/>
    <lineage>
        <taxon>Bacteria</taxon>
        <taxon>Pseudomonadati</taxon>
        <taxon>Pseudomonadota</taxon>
        <taxon>Gammaproteobacteria</taxon>
        <taxon>Moraxellales</taxon>
        <taxon>Moraxellaceae</taxon>
        <taxon>Acinetobacter</taxon>
        <taxon>Acinetobacter calcoaceticus/baumannii complex</taxon>
    </lineage>
</organism>
<proteinExistence type="inferred from homology"/>
<reference key="1">
    <citation type="journal article" date="2008" name="J. Bacteriol.">
        <title>Comparative genome sequence analysis of multidrug-resistant Acinetobacter baumannii.</title>
        <authorList>
            <person name="Adams M.D."/>
            <person name="Goglin K."/>
            <person name="Molyneaux N."/>
            <person name="Hujer K.M."/>
            <person name="Lavender H."/>
            <person name="Jamison J.J."/>
            <person name="MacDonald I.J."/>
            <person name="Martin K.M."/>
            <person name="Russo T."/>
            <person name="Campagnari A.A."/>
            <person name="Hujer A.M."/>
            <person name="Bonomo R.A."/>
            <person name="Gill S.R."/>
        </authorList>
    </citation>
    <scope>NUCLEOTIDE SEQUENCE [LARGE SCALE GENOMIC DNA]</scope>
    <source>
        <strain>AB307-0294</strain>
    </source>
</reference>
<keyword id="KW-0004">4Fe-4S</keyword>
<keyword id="KW-0408">Iron</keyword>
<keyword id="KW-0411">Iron-sulfur</keyword>
<keyword id="KW-0479">Metal-binding</keyword>
<accession>B7GXX8</accession>
<comment type="function">
    <text evidence="1">Involved in iron-sulfur cluster biogenesis. Binds a 4Fe-4S cluster, can transfer this cluster to apoproteins, and thereby intervenes in the maturation of Fe/S proteins. Could also act as a scaffold/chaperone for damaged Fe/S proteins.</text>
</comment>
<comment type="cofactor">
    <cofactor evidence="1">
        <name>[4Fe-4S] cluster</name>
        <dbReference type="ChEBI" id="CHEBI:49883"/>
    </cofactor>
    <text evidence="1">Binds 1 [4Fe-4S] cluster per subunit. The cluster is presumably bound at the interface of two monomers.</text>
</comment>
<comment type="subunit">
    <text evidence="1">Homodimer.</text>
</comment>
<comment type="similarity">
    <text evidence="1">Belongs to the NfuA family.</text>
</comment>
<feature type="chain" id="PRO_1000186727" description="Fe/S biogenesis protein NfuA">
    <location>
        <begin position="1"/>
        <end position="212"/>
    </location>
</feature>
<feature type="binding site" evidence="1">
    <location>
        <position position="169"/>
    </location>
    <ligand>
        <name>[4Fe-4S] cluster</name>
        <dbReference type="ChEBI" id="CHEBI:49883"/>
    </ligand>
</feature>
<feature type="binding site" evidence="1">
    <location>
        <position position="172"/>
    </location>
    <ligand>
        <name>[4Fe-4S] cluster</name>
        <dbReference type="ChEBI" id="CHEBI:49883"/>
    </ligand>
</feature>